<protein>
    <recommendedName>
        <fullName>Double-stranded RNA-binding protein 8</fullName>
    </recommendedName>
    <alternativeName>
        <fullName>dsRNA-binding protein 1</fullName>
        <shortName>OsDRB1</shortName>
    </alternativeName>
    <alternativeName>
        <fullName>dsRNA-binding protein 8</fullName>
    </alternativeName>
</protein>
<comment type="function">
    <text evidence="3">Binds double-stranded RNA.</text>
</comment>
<proteinExistence type="evidence at transcript level"/>
<name>DRB8_ORYSJ</name>
<feature type="chain" id="PRO_0000404685" description="Double-stranded RNA-binding protein 8">
    <location>
        <begin position="1"/>
        <end position="424"/>
    </location>
</feature>
<feature type="domain" description="DRBM 1" evidence="1">
    <location>
        <begin position="33"/>
        <end position="102"/>
    </location>
</feature>
<feature type="domain" description="DRBM 2" evidence="1">
    <location>
        <begin position="118"/>
        <end position="185"/>
    </location>
</feature>
<feature type="region of interest" description="Disordered" evidence="2">
    <location>
        <begin position="1"/>
        <end position="22"/>
    </location>
</feature>
<feature type="region of interest" description="Disordered" evidence="2">
    <location>
        <begin position="287"/>
        <end position="330"/>
    </location>
</feature>
<feature type="compositionally biased region" description="Pro residues" evidence="2">
    <location>
        <begin position="1"/>
        <end position="10"/>
    </location>
</feature>
<feature type="compositionally biased region" description="Basic and acidic residues" evidence="2">
    <location>
        <begin position="287"/>
        <end position="308"/>
    </location>
</feature>
<feature type="compositionally biased region" description="Basic and acidic residues" evidence="2">
    <location>
        <begin position="318"/>
        <end position="328"/>
    </location>
</feature>
<feature type="sequence conflict" description="In Ref. 6; AAY21792." evidence="4" ref="6">
    <original>L</original>
    <variation>R</variation>
    <location>
        <position position="8"/>
    </location>
</feature>
<feature type="sequence conflict" description="In Ref. 1; BAB00641." evidence="4" ref="1">
    <original>GGIQ</original>
    <variation>WWEYK</variation>
    <location>
        <begin position="156"/>
        <end position="159"/>
    </location>
</feature>
<feature type="sequence conflict" description="In Ref. 1; BAB00641." evidence="4" ref="1">
    <original>S</original>
    <variation>C</variation>
    <location>
        <position position="309"/>
    </location>
</feature>
<feature type="sequence conflict" description="In Ref. 6; AAY21792 and 1; BAB00641." evidence="4" ref="6 1">
    <original>Q</original>
    <variation>H</variation>
    <location>
        <position position="334"/>
    </location>
</feature>
<feature type="sequence conflict" description="In Ref. 6; AAY21792." evidence="4" ref="6">
    <original>I</original>
    <variation>M</variation>
    <location>
        <position position="410"/>
    </location>
</feature>
<accession>Q0IQN6</accession>
<accession>H2KX80</accession>
<accession>Q4ZH87</accession>
<accession>Q9LRF5</accession>
<evidence type="ECO:0000255" key="1">
    <source>
        <dbReference type="PROSITE-ProRule" id="PRU00266"/>
    </source>
</evidence>
<evidence type="ECO:0000256" key="2">
    <source>
        <dbReference type="SAM" id="MobiDB-lite"/>
    </source>
</evidence>
<evidence type="ECO:0000269" key="3">
    <source>
    </source>
</evidence>
<evidence type="ECO:0000305" key="4"/>
<keyword id="KW-1185">Reference proteome</keyword>
<keyword id="KW-0677">Repeat</keyword>
<keyword id="KW-0694">RNA-binding</keyword>
<organism>
    <name type="scientific">Oryza sativa subsp. japonica</name>
    <name type="common">Rice</name>
    <dbReference type="NCBI Taxonomy" id="39947"/>
    <lineage>
        <taxon>Eukaryota</taxon>
        <taxon>Viridiplantae</taxon>
        <taxon>Streptophyta</taxon>
        <taxon>Embryophyta</taxon>
        <taxon>Tracheophyta</taxon>
        <taxon>Spermatophyta</taxon>
        <taxon>Magnoliopsida</taxon>
        <taxon>Liliopsida</taxon>
        <taxon>Poales</taxon>
        <taxon>Poaceae</taxon>
        <taxon>BOP clade</taxon>
        <taxon>Oryzoideae</taxon>
        <taxon>Oryzeae</taxon>
        <taxon>Oryzinae</taxon>
        <taxon>Oryza</taxon>
        <taxon>Oryza sativa</taxon>
    </lineage>
</organism>
<sequence length="424" mass="46113">MDMPPTPLPPETANTSPAPNGATAGIRVENCYVFKSRLQEYAQKTGLQTPEYHTFKEGPSHEPVFKSTVVINNTSYDSLPGFFNRKAAEQSAAEVALMEIVKSIPANANIPAVQETGLCKNLLQEYAQKMNYAIPSYICTKSASGLAPFICTVEIGGIQYIGAAARTKKDAEIKAARTALLAIQGQSEGSANGATKYIVVPGKRVGKEVEKRPIETPKPLKVKKGGFKKKWNKRKFMKKDGQAVDVEKDEARVAGDAHDSDVLMQPTVITQEASCGTLFLQPCEEAKRVEAEPPRDIEMVQPDKENQHSDAALVQPDDEARVEQEPSRDISVVQPNEEAISGKQEPSIDAAILQPKEEASSVKQEPFIDTAMLQACKEAGSVELGPARDTVISQLNEQDRAVKQEPAGDIVVPQPDVHARVVKE</sequence>
<dbReference type="EMBL" id="AB036988">
    <property type="protein sequence ID" value="BAB00641.1"/>
    <property type="molecule type" value="mRNA"/>
</dbReference>
<dbReference type="EMBL" id="DP000011">
    <property type="protein sequence ID" value="ABG21849.1"/>
    <property type="molecule type" value="Genomic_DNA"/>
</dbReference>
<dbReference type="EMBL" id="AP008218">
    <property type="protein sequence ID" value="BAF28979.1"/>
    <property type="molecule type" value="Genomic_DNA"/>
</dbReference>
<dbReference type="EMBL" id="AP014968">
    <property type="protein sequence ID" value="BAT15545.1"/>
    <property type="molecule type" value="Genomic_DNA"/>
</dbReference>
<dbReference type="EMBL" id="DQ009988">
    <property type="protein sequence ID" value="AAY21792.1"/>
    <property type="molecule type" value="mRNA"/>
</dbReference>
<dbReference type="RefSeq" id="XP_015620826.1">
    <property type="nucleotide sequence ID" value="XM_015765340.1"/>
</dbReference>
<dbReference type="SMR" id="Q0IQN6"/>
<dbReference type="FunCoup" id="Q0IQN6">
    <property type="interactions" value="1"/>
</dbReference>
<dbReference type="STRING" id="39947.Q0IQN6"/>
<dbReference type="PaxDb" id="39947-Q0IQN6"/>
<dbReference type="EnsemblPlants" id="Os12t0109900-01">
    <property type="protein sequence ID" value="Os12t0109900-01"/>
    <property type="gene ID" value="Os12g0109900"/>
</dbReference>
<dbReference type="Gramene" id="Os12t0109900-01">
    <property type="protein sequence ID" value="Os12t0109900-01"/>
    <property type="gene ID" value="Os12g0109900"/>
</dbReference>
<dbReference type="KEGG" id="dosa:Os12g0109900"/>
<dbReference type="HOGENOM" id="CLU_034148_0_0_1"/>
<dbReference type="InParanoid" id="Q0IQN6"/>
<dbReference type="OrthoDB" id="185373at2759"/>
<dbReference type="Proteomes" id="UP000000763">
    <property type="component" value="Chromosome 12"/>
</dbReference>
<dbReference type="Proteomes" id="UP000059680">
    <property type="component" value="Chromosome 12"/>
</dbReference>
<dbReference type="ExpressionAtlas" id="Q0IQN6">
    <property type="expression patterns" value="baseline and differential"/>
</dbReference>
<dbReference type="GO" id="GO:0005634">
    <property type="term" value="C:nucleus"/>
    <property type="evidence" value="ECO:0000318"/>
    <property type="project" value="GO_Central"/>
</dbReference>
<dbReference type="GO" id="GO:0003725">
    <property type="term" value="F:double-stranded RNA binding"/>
    <property type="evidence" value="ECO:0000314"/>
    <property type="project" value="UniProtKB"/>
</dbReference>
<dbReference type="GO" id="GO:0004525">
    <property type="term" value="F:ribonuclease III activity"/>
    <property type="evidence" value="ECO:0000318"/>
    <property type="project" value="GO_Central"/>
</dbReference>
<dbReference type="GO" id="GO:0010468">
    <property type="term" value="P:regulation of gene expression"/>
    <property type="evidence" value="ECO:0000318"/>
    <property type="project" value="GO_Central"/>
</dbReference>
<dbReference type="GO" id="GO:0006396">
    <property type="term" value="P:RNA processing"/>
    <property type="evidence" value="ECO:0000318"/>
    <property type="project" value="GO_Central"/>
</dbReference>
<dbReference type="FunFam" id="3.30.160.20:FF:000048">
    <property type="entry name" value="Double-stranded RNA-binding protein 1"/>
    <property type="match status" value="1"/>
</dbReference>
<dbReference type="FunFam" id="3.30.160.20:FF:000047">
    <property type="entry name" value="double-stranded RNA-binding protein 1"/>
    <property type="match status" value="1"/>
</dbReference>
<dbReference type="Gene3D" id="3.30.160.20">
    <property type="match status" value="2"/>
</dbReference>
<dbReference type="InterPro" id="IPR014720">
    <property type="entry name" value="dsRBD_dom"/>
</dbReference>
<dbReference type="PANTHER" id="PTHR11207:SF1">
    <property type="entry name" value="DOUBLE-STRANDED RNA-BINDING PROTEIN 1"/>
    <property type="match status" value="1"/>
</dbReference>
<dbReference type="PANTHER" id="PTHR11207">
    <property type="entry name" value="RIBONUCLEASE III"/>
    <property type="match status" value="1"/>
</dbReference>
<dbReference type="Pfam" id="PF00035">
    <property type="entry name" value="dsrm"/>
    <property type="match status" value="2"/>
</dbReference>
<dbReference type="SMART" id="SM00358">
    <property type="entry name" value="DSRM"/>
    <property type="match status" value="2"/>
</dbReference>
<dbReference type="SUPFAM" id="SSF54768">
    <property type="entry name" value="dsRNA-binding domain-like"/>
    <property type="match status" value="2"/>
</dbReference>
<dbReference type="PROSITE" id="PS50137">
    <property type="entry name" value="DS_RBD"/>
    <property type="match status" value="2"/>
</dbReference>
<gene>
    <name type="primary">DRB8</name>
    <name type="synonym">DRB1</name>
    <name type="ordered locus">Os12g0109900</name>
    <name type="ordered locus">LOC_Os12g01916</name>
</gene>
<reference key="1">
    <citation type="journal article" date="2005" name="Plant Mol. Biol.">
        <title>Specific interactions between Dicer-like proteins and HYL1/DRB-family dsRNA-binding proteins in Arabidopsis thaliana.</title>
        <authorList>
            <person name="Hiraguri A."/>
            <person name="Itoh R."/>
            <person name="Kondo N."/>
            <person name="Nomura Y."/>
            <person name="Aizawa D."/>
            <person name="Murai Y."/>
            <person name="Koiwa H."/>
            <person name="Seki M."/>
            <person name="Shinozaki K."/>
            <person name="Fukuhara T."/>
        </authorList>
    </citation>
    <scope>NUCLEOTIDE SEQUENCE [MRNA]</scope>
    <scope>FUNCTION</scope>
    <source>
        <strain>cv. Nipponbare</strain>
    </source>
</reference>
<reference key="2">
    <citation type="journal article" date="2005" name="BMC Biol.">
        <title>The sequence of rice chromosomes 11 and 12, rich in disease resistance genes and recent gene duplications.</title>
        <authorList>
            <consortium name="The rice chromosomes 11 and 12 sequencing consortia"/>
        </authorList>
    </citation>
    <scope>NUCLEOTIDE SEQUENCE [LARGE SCALE GENOMIC DNA]</scope>
    <source>
        <strain>cv. Nipponbare</strain>
    </source>
</reference>
<reference key="3">
    <citation type="journal article" date="2005" name="Nature">
        <title>The map-based sequence of the rice genome.</title>
        <authorList>
            <consortium name="International rice genome sequencing project (IRGSP)"/>
        </authorList>
    </citation>
    <scope>NUCLEOTIDE SEQUENCE [LARGE SCALE GENOMIC DNA]</scope>
    <source>
        <strain>cv. Nipponbare</strain>
    </source>
</reference>
<reference key="4">
    <citation type="journal article" date="2008" name="Nucleic Acids Res.">
        <title>The rice annotation project database (RAP-DB): 2008 update.</title>
        <authorList>
            <consortium name="The rice annotation project (RAP)"/>
        </authorList>
    </citation>
    <scope>GENOME REANNOTATION</scope>
    <source>
        <strain>cv. Nipponbare</strain>
    </source>
</reference>
<reference key="5">
    <citation type="journal article" date="2013" name="Rice">
        <title>Improvement of the Oryza sativa Nipponbare reference genome using next generation sequence and optical map data.</title>
        <authorList>
            <person name="Kawahara Y."/>
            <person name="de la Bastide M."/>
            <person name="Hamilton J.P."/>
            <person name="Kanamori H."/>
            <person name="McCombie W.R."/>
            <person name="Ouyang S."/>
            <person name="Schwartz D.C."/>
            <person name="Tanaka T."/>
            <person name="Wu J."/>
            <person name="Zhou S."/>
            <person name="Childs K.L."/>
            <person name="Davidson R.M."/>
            <person name="Lin H."/>
            <person name="Quesada-Ocampo L."/>
            <person name="Vaillancourt B."/>
            <person name="Sakai H."/>
            <person name="Lee S.S."/>
            <person name="Kim J."/>
            <person name="Numa H."/>
            <person name="Itoh T."/>
            <person name="Buell C.R."/>
            <person name="Matsumoto T."/>
        </authorList>
    </citation>
    <scope>GENOME REANNOTATION</scope>
    <source>
        <strain>cv. Nipponbare</strain>
    </source>
</reference>
<reference key="6">
    <citation type="journal article" date="2002" name="Zhi Wu Sheng Li Yu Fen Zi Sheng Wu Xue Xue Bao">
        <title>Isolation and expressional analysis of cDNA encoding a dsRNA binding protein homolog OsRBP of rice.</title>
        <authorList>
            <person name="Tang X."/>
            <person name="Wu H."/>
            <person name="Jia M."/>
            <person name="Yu X."/>
            <person name="He Y."/>
        </authorList>
    </citation>
    <scope>NUCLEOTIDE SEQUENCE [MRNA] OF 1-410</scope>
    <source>
        <tissue>Leaf</tissue>
    </source>
</reference>